<accession>Q747Q5</accession>
<feature type="chain" id="PRO_1000078383" description="Probable nicotinate-nucleotide adenylyltransferase">
    <location>
        <begin position="1"/>
        <end position="216"/>
    </location>
</feature>
<keyword id="KW-0067">ATP-binding</keyword>
<keyword id="KW-0520">NAD</keyword>
<keyword id="KW-0547">Nucleotide-binding</keyword>
<keyword id="KW-0548">Nucleotidyltransferase</keyword>
<keyword id="KW-0662">Pyridine nucleotide biosynthesis</keyword>
<keyword id="KW-1185">Reference proteome</keyword>
<keyword id="KW-0808">Transferase</keyword>
<dbReference type="EC" id="2.7.7.18" evidence="1"/>
<dbReference type="EMBL" id="AE017180">
    <property type="protein sequence ID" value="AAR36601.1"/>
    <property type="molecule type" value="Genomic_DNA"/>
</dbReference>
<dbReference type="RefSeq" id="NP_954251.1">
    <property type="nucleotide sequence ID" value="NC_002939.5"/>
</dbReference>
<dbReference type="RefSeq" id="WP_010943828.1">
    <property type="nucleotide sequence ID" value="NC_002939.5"/>
</dbReference>
<dbReference type="SMR" id="Q747Q5"/>
<dbReference type="FunCoup" id="Q747Q5">
    <property type="interactions" value="329"/>
</dbReference>
<dbReference type="STRING" id="243231.GSU3210"/>
<dbReference type="EnsemblBacteria" id="AAR36601">
    <property type="protein sequence ID" value="AAR36601"/>
    <property type="gene ID" value="GSU3210"/>
</dbReference>
<dbReference type="KEGG" id="gsu:GSU3210"/>
<dbReference type="PATRIC" id="fig|243231.5.peg.3234"/>
<dbReference type="eggNOG" id="COG1057">
    <property type="taxonomic scope" value="Bacteria"/>
</dbReference>
<dbReference type="HOGENOM" id="CLU_069765_0_1_7"/>
<dbReference type="InParanoid" id="Q747Q5"/>
<dbReference type="OrthoDB" id="5295945at2"/>
<dbReference type="UniPathway" id="UPA00253">
    <property type="reaction ID" value="UER00332"/>
</dbReference>
<dbReference type="Proteomes" id="UP000000577">
    <property type="component" value="Chromosome"/>
</dbReference>
<dbReference type="GO" id="GO:0005524">
    <property type="term" value="F:ATP binding"/>
    <property type="evidence" value="ECO:0007669"/>
    <property type="project" value="UniProtKB-KW"/>
</dbReference>
<dbReference type="GO" id="GO:0000309">
    <property type="term" value="F:nicotinamide-nucleotide adenylyltransferase activity"/>
    <property type="evidence" value="ECO:0000318"/>
    <property type="project" value="GO_Central"/>
</dbReference>
<dbReference type="GO" id="GO:0004515">
    <property type="term" value="F:nicotinate-nucleotide adenylyltransferase activity"/>
    <property type="evidence" value="ECO:0000318"/>
    <property type="project" value="GO_Central"/>
</dbReference>
<dbReference type="GO" id="GO:0009435">
    <property type="term" value="P:NAD biosynthetic process"/>
    <property type="evidence" value="ECO:0000318"/>
    <property type="project" value="GO_Central"/>
</dbReference>
<dbReference type="CDD" id="cd02165">
    <property type="entry name" value="NMNAT"/>
    <property type="match status" value="1"/>
</dbReference>
<dbReference type="Gene3D" id="3.40.50.620">
    <property type="entry name" value="HUPs"/>
    <property type="match status" value="1"/>
</dbReference>
<dbReference type="HAMAP" id="MF_00244">
    <property type="entry name" value="NaMN_adenylyltr"/>
    <property type="match status" value="1"/>
</dbReference>
<dbReference type="InterPro" id="IPR004821">
    <property type="entry name" value="Cyt_trans-like"/>
</dbReference>
<dbReference type="InterPro" id="IPR005248">
    <property type="entry name" value="NadD/NMNAT"/>
</dbReference>
<dbReference type="InterPro" id="IPR014729">
    <property type="entry name" value="Rossmann-like_a/b/a_fold"/>
</dbReference>
<dbReference type="NCBIfam" id="TIGR00125">
    <property type="entry name" value="cyt_tran_rel"/>
    <property type="match status" value="1"/>
</dbReference>
<dbReference type="NCBIfam" id="TIGR00482">
    <property type="entry name" value="nicotinate (nicotinamide) nucleotide adenylyltransferase"/>
    <property type="match status" value="1"/>
</dbReference>
<dbReference type="NCBIfam" id="NF000840">
    <property type="entry name" value="PRK00071.1-3"/>
    <property type="match status" value="1"/>
</dbReference>
<dbReference type="PANTHER" id="PTHR39321">
    <property type="entry name" value="NICOTINATE-NUCLEOTIDE ADENYLYLTRANSFERASE-RELATED"/>
    <property type="match status" value="1"/>
</dbReference>
<dbReference type="PANTHER" id="PTHR39321:SF3">
    <property type="entry name" value="PHOSPHOPANTETHEINE ADENYLYLTRANSFERASE"/>
    <property type="match status" value="1"/>
</dbReference>
<dbReference type="Pfam" id="PF01467">
    <property type="entry name" value="CTP_transf_like"/>
    <property type="match status" value="1"/>
</dbReference>
<dbReference type="SUPFAM" id="SSF52374">
    <property type="entry name" value="Nucleotidylyl transferase"/>
    <property type="match status" value="1"/>
</dbReference>
<reference key="1">
    <citation type="journal article" date="2003" name="Science">
        <title>Genome of Geobacter sulfurreducens: metal reduction in subsurface environments.</title>
        <authorList>
            <person name="Methe B.A."/>
            <person name="Nelson K.E."/>
            <person name="Eisen J.A."/>
            <person name="Paulsen I.T."/>
            <person name="Nelson W.C."/>
            <person name="Heidelberg J.F."/>
            <person name="Wu D."/>
            <person name="Wu M."/>
            <person name="Ward N.L."/>
            <person name="Beanan M.J."/>
            <person name="Dodson R.J."/>
            <person name="Madupu R."/>
            <person name="Brinkac L.M."/>
            <person name="Daugherty S.C."/>
            <person name="DeBoy R.T."/>
            <person name="Durkin A.S."/>
            <person name="Gwinn M.L."/>
            <person name="Kolonay J.F."/>
            <person name="Sullivan S.A."/>
            <person name="Haft D.H."/>
            <person name="Selengut J."/>
            <person name="Davidsen T.M."/>
            <person name="Zafar N."/>
            <person name="White O."/>
            <person name="Tran B."/>
            <person name="Romero C."/>
            <person name="Forberger H.A."/>
            <person name="Weidman J.F."/>
            <person name="Khouri H.M."/>
            <person name="Feldblyum T.V."/>
            <person name="Utterback T.R."/>
            <person name="Van Aken S.E."/>
            <person name="Lovley D.R."/>
            <person name="Fraser C.M."/>
        </authorList>
    </citation>
    <scope>NUCLEOTIDE SEQUENCE [LARGE SCALE GENOMIC DNA]</scope>
    <source>
        <strain>ATCC 51573 / DSM 12127 / PCA</strain>
    </source>
</reference>
<sequence>MKTGILGGTFNPVHVAHLRIAEEVRDTFALDRVLFIPAASPPHKAMEGEVPFETRCAMVRLATADNHAFAVSDMEGGRPGKSYSVDTIRALKEEYPGDEFFFIIGSDSFLDIGSWYDYEAIFASCNLVVAARPGAEAADLLAALPVAITAQFCYYPAEKRLAHRSGYSVYWLAGVPLDISSRSIRGLARLGRSIRYLVPEAVERYINEQRIYAHDG</sequence>
<evidence type="ECO:0000255" key="1">
    <source>
        <dbReference type="HAMAP-Rule" id="MF_00244"/>
    </source>
</evidence>
<organism>
    <name type="scientific">Geobacter sulfurreducens (strain ATCC 51573 / DSM 12127 / PCA)</name>
    <dbReference type="NCBI Taxonomy" id="243231"/>
    <lineage>
        <taxon>Bacteria</taxon>
        <taxon>Pseudomonadati</taxon>
        <taxon>Thermodesulfobacteriota</taxon>
        <taxon>Desulfuromonadia</taxon>
        <taxon>Geobacterales</taxon>
        <taxon>Geobacteraceae</taxon>
        <taxon>Geobacter</taxon>
    </lineage>
</organism>
<protein>
    <recommendedName>
        <fullName evidence="1">Probable nicotinate-nucleotide adenylyltransferase</fullName>
        <ecNumber evidence="1">2.7.7.18</ecNumber>
    </recommendedName>
    <alternativeName>
        <fullName evidence="1">Deamido-NAD(+) diphosphorylase</fullName>
    </alternativeName>
    <alternativeName>
        <fullName evidence="1">Deamido-NAD(+) pyrophosphorylase</fullName>
    </alternativeName>
    <alternativeName>
        <fullName evidence="1">Nicotinate mononucleotide adenylyltransferase</fullName>
        <shortName evidence="1">NaMN adenylyltransferase</shortName>
    </alternativeName>
</protein>
<gene>
    <name evidence="1" type="primary">nadD</name>
    <name type="ordered locus">GSU3210</name>
</gene>
<comment type="function">
    <text evidence="1">Catalyzes the reversible adenylation of nicotinate mononucleotide (NaMN) to nicotinic acid adenine dinucleotide (NaAD).</text>
</comment>
<comment type="catalytic activity">
    <reaction evidence="1">
        <text>nicotinate beta-D-ribonucleotide + ATP + H(+) = deamido-NAD(+) + diphosphate</text>
        <dbReference type="Rhea" id="RHEA:22860"/>
        <dbReference type="ChEBI" id="CHEBI:15378"/>
        <dbReference type="ChEBI" id="CHEBI:30616"/>
        <dbReference type="ChEBI" id="CHEBI:33019"/>
        <dbReference type="ChEBI" id="CHEBI:57502"/>
        <dbReference type="ChEBI" id="CHEBI:58437"/>
        <dbReference type="EC" id="2.7.7.18"/>
    </reaction>
</comment>
<comment type="pathway">
    <text evidence="1">Cofactor biosynthesis; NAD(+) biosynthesis; deamido-NAD(+) from nicotinate D-ribonucleotide: step 1/1.</text>
</comment>
<comment type="similarity">
    <text evidence="1">Belongs to the NadD family.</text>
</comment>
<name>NADD_GEOSL</name>
<proteinExistence type="inferred from homology"/>